<organism>
    <name type="scientific">Buchnera aphidicola subsp. Acyrthosiphon pisum (strain APS)</name>
    <name type="common">Acyrthosiphon pisum symbiotic bacterium</name>
    <dbReference type="NCBI Taxonomy" id="107806"/>
    <lineage>
        <taxon>Bacteria</taxon>
        <taxon>Pseudomonadati</taxon>
        <taxon>Pseudomonadota</taxon>
        <taxon>Gammaproteobacteria</taxon>
        <taxon>Enterobacterales</taxon>
        <taxon>Erwiniaceae</taxon>
        <taxon>Buchnera</taxon>
    </lineage>
</organism>
<feature type="chain" id="PRO_0000131485" description="Small ribosomal subunit protein uS5">
    <location>
        <begin position="1"/>
        <end position="167"/>
    </location>
</feature>
<feature type="domain" description="S5 DRBM" evidence="1">
    <location>
        <begin position="12"/>
        <end position="75"/>
    </location>
</feature>
<proteinExistence type="inferred from homology"/>
<gene>
    <name evidence="1" type="primary">rpsE</name>
    <name type="ordered locus">BU507</name>
</gene>
<sequence length="167" mass="17881">MANIEKKNHNDLQEKLITVNRVSKTVKGGRIFSFTALTVVGNGDGKVGFGYGKAREVPAAIQKAMEQARRNMITIPLVNKTLQHSLKGSHTGSNVFMKPASDGTGIIAGGAMRAVLEVAGIHNVLAKTYGSTNPINVVRATMNGLVNMKSPEMIAAKRNKRIKDILG</sequence>
<accession>P57574</accession>
<keyword id="KW-1185">Reference proteome</keyword>
<keyword id="KW-0687">Ribonucleoprotein</keyword>
<keyword id="KW-0689">Ribosomal protein</keyword>
<keyword id="KW-0694">RNA-binding</keyword>
<keyword id="KW-0699">rRNA-binding</keyword>
<protein>
    <recommendedName>
        <fullName evidence="1">Small ribosomal subunit protein uS5</fullName>
    </recommendedName>
    <alternativeName>
        <fullName evidence="2">30S ribosomal protein S5</fullName>
    </alternativeName>
</protein>
<name>RS5_BUCAI</name>
<comment type="function">
    <text evidence="1">With S4 and S12 plays an important role in translational accuracy.</text>
</comment>
<comment type="function">
    <text evidence="1">Located at the back of the 30S subunit body where it stabilizes the conformation of the head with respect to the body.</text>
</comment>
<comment type="subunit">
    <text evidence="1">Part of the 30S ribosomal subunit. Contacts proteins S4 and S8.</text>
</comment>
<comment type="domain">
    <text>The N-terminal domain interacts with the head of the 30S subunit; the C-terminal domain interacts with the body and contacts protein S4. The interaction surface between S4 and S5 is involved in control of translational fidelity.</text>
</comment>
<comment type="similarity">
    <text evidence="1">Belongs to the universal ribosomal protein uS5 family.</text>
</comment>
<dbReference type="EMBL" id="BA000003">
    <property type="protein sequence ID" value="BAB13200.1"/>
    <property type="molecule type" value="Genomic_DNA"/>
</dbReference>
<dbReference type="RefSeq" id="NP_240314.1">
    <property type="nucleotide sequence ID" value="NC_002528.1"/>
</dbReference>
<dbReference type="RefSeq" id="WP_009874458.1">
    <property type="nucleotide sequence ID" value="NZ_AP036055.1"/>
</dbReference>
<dbReference type="SMR" id="P57574"/>
<dbReference type="STRING" id="563178.BUAP5A_500"/>
<dbReference type="EnsemblBacteria" id="BAB13200">
    <property type="protein sequence ID" value="BAB13200"/>
    <property type="gene ID" value="BAB13200"/>
</dbReference>
<dbReference type="KEGG" id="buc:BU507"/>
<dbReference type="PATRIC" id="fig|107806.10.peg.512"/>
<dbReference type="eggNOG" id="COG0098">
    <property type="taxonomic scope" value="Bacteria"/>
</dbReference>
<dbReference type="HOGENOM" id="CLU_065898_2_2_6"/>
<dbReference type="Proteomes" id="UP000001806">
    <property type="component" value="Chromosome"/>
</dbReference>
<dbReference type="GO" id="GO:0015935">
    <property type="term" value="C:small ribosomal subunit"/>
    <property type="evidence" value="ECO:0007669"/>
    <property type="project" value="InterPro"/>
</dbReference>
<dbReference type="GO" id="GO:0019843">
    <property type="term" value="F:rRNA binding"/>
    <property type="evidence" value="ECO:0007669"/>
    <property type="project" value="UniProtKB-UniRule"/>
</dbReference>
<dbReference type="GO" id="GO:0003735">
    <property type="term" value="F:structural constituent of ribosome"/>
    <property type="evidence" value="ECO:0007669"/>
    <property type="project" value="InterPro"/>
</dbReference>
<dbReference type="GO" id="GO:0006412">
    <property type="term" value="P:translation"/>
    <property type="evidence" value="ECO:0007669"/>
    <property type="project" value="UniProtKB-UniRule"/>
</dbReference>
<dbReference type="FunFam" id="3.30.160.20:FF:000001">
    <property type="entry name" value="30S ribosomal protein S5"/>
    <property type="match status" value="1"/>
</dbReference>
<dbReference type="FunFam" id="3.30.230.10:FF:000002">
    <property type="entry name" value="30S ribosomal protein S5"/>
    <property type="match status" value="1"/>
</dbReference>
<dbReference type="Gene3D" id="3.30.160.20">
    <property type="match status" value="1"/>
</dbReference>
<dbReference type="Gene3D" id="3.30.230.10">
    <property type="match status" value="1"/>
</dbReference>
<dbReference type="HAMAP" id="MF_01307_B">
    <property type="entry name" value="Ribosomal_uS5_B"/>
    <property type="match status" value="1"/>
</dbReference>
<dbReference type="InterPro" id="IPR020568">
    <property type="entry name" value="Ribosomal_Su5_D2-typ_SF"/>
</dbReference>
<dbReference type="InterPro" id="IPR000851">
    <property type="entry name" value="Ribosomal_uS5"/>
</dbReference>
<dbReference type="InterPro" id="IPR005712">
    <property type="entry name" value="Ribosomal_uS5_bac-type"/>
</dbReference>
<dbReference type="InterPro" id="IPR005324">
    <property type="entry name" value="Ribosomal_uS5_C"/>
</dbReference>
<dbReference type="InterPro" id="IPR013810">
    <property type="entry name" value="Ribosomal_uS5_N"/>
</dbReference>
<dbReference type="InterPro" id="IPR018192">
    <property type="entry name" value="Ribosomal_uS5_N_CS"/>
</dbReference>
<dbReference type="InterPro" id="IPR014721">
    <property type="entry name" value="Ribsml_uS5_D2-typ_fold_subgr"/>
</dbReference>
<dbReference type="NCBIfam" id="TIGR01021">
    <property type="entry name" value="rpsE_bact"/>
    <property type="match status" value="1"/>
</dbReference>
<dbReference type="PANTHER" id="PTHR48277">
    <property type="entry name" value="MITOCHONDRIAL RIBOSOMAL PROTEIN S5"/>
    <property type="match status" value="1"/>
</dbReference>
<dbReference type="PANTHER" id="PTHR48277:SF1">
    <property type="entry name" value="MITOCHONDRIAL RIBOSOMAL PROTEIN S5"/>
    <property type="match status" value="1"/>
</dbReference>
<dbReference type="Pfam" id="PF00333">
    <property type="entry name" value="Ribosomal_S5"/>
    <property type="match status" value="1"/>
</dbReference>
<dbReference type="Pfam" id="PF03719">
    <property type="entry name" value="Ribosomal_S5_C"/>
    <property type="match status" value="1"/>
</dbReference>
<dbReference type="SUPFAM" id="SSF54768">
    <property type="entry name" value="dsRNA-binding domain-like"/>
    <property type="match status" value="1"/>
</dbReference>
<dbReference type="SUPFAM" id="SSF54211">
    <property type="entry name" value="Ribosomal protein S5 domain 2-like"/>
    <property type="match status" value="1"/>
</dbReference>
<dbReference type="PROSITE" id="PS00585">
    <property type="entry name" value="RIBOSOMAL_S5"/>
    <property type="match status" value="1"/>
</dbReference>
<dbReference type="PROSITE" id="PS50881">
    <property type="entry name" value="S5_DSRBD"/>
    <property type="match status" value="1"/>
</dbReference>
<evidence type="ECO:0000255" key="1">
    <source>
        <dbReference type="HAMAP-Rule" id="MF_01307"/>
    </source>
</evidence>
<evidence type="ECO:0000305" key="2"/>
<reference key="1">
    <citation type="journal article" date="2000" name="Nature">
        <title>Genome sequence of the endocellular bacterial symbiont of aphids Buchnera sp. APS.</title>
        <authorList>
            <person name="Shigenobu S."/>
            <person name="Watanabe H."/>
            <person name="Hattori M."/>
            <person name="Sakaki Y."/>
            <person name="Ishikawa H."/>
        </authorList>
    </citation>
    <scope>NUCLEOTIDE SEQUENCE [LARGE SCALE GENOMIC DNA]</scope>
    <source>
        <strain>APS</strain>
    </source>
</reference>